<accession>A0M8T2</accession>
<proteinExistence type="inferred from homology"/>
<dbReference type="EMBL" id="DP000234">
    <property type="protein sequence ID" value="AAR16235.1"/>
    <property type="molecule type" value="Genomic_DNA"/>
</dbReference>
<dbReference type="RefSeq" id="NP_001162170.1">
    <property type="nucleotide sequence ID" value="NM_001168699.1"/>
</dbReference>
<dbReference type="SMR" id="A0M8T2"/>
<dbReference type="STRING" id="9685.ENSFCAP00000029223"/>
<dbReference type="GlyCosmos" id="A0M8T2">
    <property type="glycosylation" value="1 site, No reported glycans"/>
</dbReference>
<dbReference type="PaxDb" id="9685-ENSFCAP00000012292"/>
<dbReference type="Ensembl" id="ENSFCAT00000045560.3">
    <property type="protein sequence ID" value="ENSFCAP00000029223.3"/>
    <property type="gene ID" value="ENSFCAG00000036421.3"/>
</dbReference>
<dbReference type="GeneID" id="493672"/>
<dbReference type="KEGG" id="fca:493672"/>
<dbReference type="CTD" id="7472"/>
<dbReference type="VGNC" id="VGNC:80759">
    <property type="gene designation" value="WNT2"/>
</dbReference>
<dbReference type="eggNOG" id="KOG3913">
    <property type="taxonomic scope" value="Eukaryota"/>
</dbReference>
<dbReference type="GeneTree" id="ENSGT00940000159231"/>
<dbReference type="HOGENOM" id="CLU_033039_1_4_1"/>
<dbReference type="InParanoid" id="A0M8T2"/>
<dbReference type="OMA" id="ITRMTKC"/>
<dbReference type="OrthoDB" id="5945655at2759"/>
<dbReference type="TreeFam" id="TF105310"/>
<dbReference type="Proteomes" id="UP000011712">
    <property type="component" value="Chromosome A2"/>
</dbReference>
<dbReference type="Bgee" id="ENSFCAG00000036421">
    <property type="expression patterns" value="Expressed in uterus and 10 other cell types or tissues"/>
</dbReference>
<dbReference type="GO" id="GO:0005737">
    <property type="term" value="C:cytoplasm"/>
    <property type="evidence" value="ECO:0007669"/>
    <property type="project" value="Ensembl"/>
</dbReference>
<dbReference type="GO" id="GO:0005615">
    <property type="term" value="C:extracellular space"/>
    <property type="evidence" value="ECO:0000318"/>
    <property type="project" value="GO_Central"/>
</dbReference>
<dbReference type="GO" id="GO:0005125">
    <property type="term" value="F:cytokine activity"/>
    <property type="evidence" value="ECO:0000318"/>
    <property type="project" value="GO_Central"/>
</dbReference>
<dbReference type="GO" id="GO:0005109">
    <property type="term" value="F:frizzled binding"/>
    <property type="evidence" value="ECO:0000318"/>
    <property type="project" value="GO_Central"/>
</dbReference>
<dbReference type="GO" id="GO:0055009">
    <property type="term" value="P:atrial cardiac muscle tissue morphogenesis"/>
    <property type="evidence" value="ECO:0007669"/>
    <property type="project" value="Ensembl"/>
</dbReference>
<dbReference type="GO" id="GO:0060070">
    <property type="term" value="P:canonical Wnt signaling pathway"/>
    <property type="evidence" value="ECO:0000318"/>
    <property type="project" value="GO_Central"/>
</dbReference>
<dbReference type="GO" id="GO:0060317">
    <property type="term" value="P:cardiac epithelial to mesenchymal transition"/>
    <property type="evidence" value="ECO:0007669"/>
    <property type="project" value="Ensembl"/>
</dbReference>
<dbReference type="GO" id="GO:0060038">
    <property type="term" value="P:cardiac muscle cell proliferation"/>
    <property type="evidence" value="ECO:0007669"/>
    <property type="project" value="Ensembl"/>
</dbReference>
<dbReference type="GO" id="GO:0045165">
    <property type="term" value="P:cell fate commitment"/>
    <property type="evidence" value="ECO:0000318"/>
    <property type="project" value="GO_Central"/>
</dbReference>
<dbReference type="GO" id="GO:0033278">
    <property type="term" value="P:cell proliferation in midbrain"/>
    <property type="evidence" value="ECO:0007669"/>
    <property type="project" value="Ensembl"/>
</dbReference>
<dbReference type="GO" id="GO:0007267">
    <property type="term" value="P:cell-cell signaling"/>
    <property type="evidence" value="ECO:0007669"/>
    <property type="project" value="Ensembl"/>
</dbReference>
<dbReference type="GO" id="GO:0071560">
    <property type="term" value="P:cellular response to transforming growth factor beta stimulus"/>
    <property type="evidence" value="ECO:0007669"/>
    <property type="project" value="Ensembl"/>
</dbReference>
<dbReference type="GO" id="GO:0060502">
    <property type="term" value="P:epithelial cell proliferation involved in lung morphogenesis"/>
    <property type="evidence" value="ECO:0007669"/>
    <property type="project" value="Ensembl"/>
</dbReference>
<dbReference type="GO" id="GO:0060716">
    <property type="term" value="P:labyrinthine layer blood vessel development"/>
    <property type="evidence" value="ECO:0007669"/>
    <property type="project" value="Ensembl"/>
</dbReference>
<dbReference type="GO" id="GO:0060492">
    <property type="term" value="P:lung induction"/>
    <property type="evidence" value="ECO:0007669"/>
    <property type="project" value="Ensembl"/>
</dbReference>
<dbReference type="GO" id="GO:0061180">
    <property type="term" value="P:mammary gland epithelium development"/>
    <property type="evidence" value="ECO:0007669"/>
    <property type="project" value="Ensembl"/>
</dbReference>
<dbReference type="GO" id="GO:0010463">
    <property type="term" value="P:mesenchymal cell proliferation"/>
    <property type="evidence" value="ECO:0007669"/>
    <property type="project" value="Ensembl"/>
</dbReference>
<dbReference type="GO" id="GO:1904948">
    <property type="term" value="P:midbrain dopaminergic neuron differentiation"/>
    <property type="evidence" value="ECO:0007669"/>
    <property type="project" value="Ensembl"/>
</dbReference>
<dbReference type="GO" id="GO:0030182">
    <property type="term" value="P:neuron differentiation"/>
    <property type="evidence" value="ECO:0000318"/>
    <property type="project" value="GO_Central"/>
</dbReference>
<dbReference type="GO" id="GO:0060045">
    <property type="term" value="P:positive regulation of cardiac muscle cell proliferation"/>
    <property type="evidence" value="ECO:0007669"/>
    <property type="project" value="Ensembl"/>
</dbReference>
<dbReference type="GO" id="GO:0060501">
    <property type="term" value="P:positive regulation of epithelial cell proliferation involved in lung morphogenesis"/>
    <property type="evidence" value="ECO:0007669"/>
    <property type="project" value="Ensembl"/>
</dbReference>
<dbReference type="GO" id="GO:0048146">
    <property type="term" value="P:positive regulation of fibroblast proliferation"/>
    <property type="evidence" value="ECO:0007669"/>
    <property type="project" value="Ensembl"/>
</dbReference>
<dbReference type="GO" id="GO:0002053">
    <property type="term" value="P:positive regulation of mesenchymal cell proliferation"/>
    <property type="evidence" value="ECO:0007669"/>
    <property type="project" value="Ensembl"/>
</dbReference>
<dbReference type="GO" id="GO:0050769">
    <property type="term" value="P:positive regulation of neurogenesis"/>
    <property type="evidence" value="ECO:0007669"/>
    <property type="project" value="Ensembl"/>
</dbReference>
<dbReference type="GO" id="GO:0045944">
    <property type="term" value="P:positive regulation of transcription by RNA polymerase II"/>
    <property type="evidence" value="ECO:0007669"/>
    <property type="project" value="Ensembl"/>
</dbReference>
<dbReference type="CDD" id="cd19345">
    <property type="entry name" value="Wnt_Wnt2"/>
    <property type="match status" value="1"/>
</dbReference>
<dbReference type="FunFam" id="3.30.2460.20:FF:000001">
    <property type="entry name" value="Wnt homolog"/>
    <property type="match status" value="1"/>
</dbReference>
<dbReference type="Gene3D" id="3.30.2460.20">
    <property type="match status" value="1"/>
</dbReference>
<dbReference type="InterPro" id="IPR005817">
    <property type="entry name" value="Wnt"/>
</dbReference>
<dbReference type="InterPro" id="IPR009140">
    <property type="entry name" value="Wnt2"/>
</dbReference>
<dbReference type="InterPro" id="IPR043158">
    <property type="entry name" value="Wnt_C"/>
</dbReference>
<dbReference type="InterPro" id="IPR018161">
    <property type="entry name" value="Wnt_CS"/>
</dbReference>
<dbReference type="PANTHER" id="PTHR12027:SF86">
    <property type="entry name" value="PROTEIN WNT-2"/>
    <property type="match status" value="1"/>
</dbReference>
<dbReference type="PANTHER" id="PTHR12027">
    <property type="entry name" value="WNT RELATED"/>
    <property type="match status" value="1"/>
</dbReference>
<dbReference type="Pfam" id="PF00110">
    <property type="entry name" value="wnt"/>
    <property type="match status" value="1"/>
</dbReference>
<dbReference type="PRINTS" id="PR01842">
    <property type="entry name" value="WNT2PROTEIN"/>
</dbReference>
<dbReference type="PRINTS" id="PR01349">
    <property type="entry name" value="WNTPROTEIN"/>
</dbReference>
<dbReference type="SMART" id="SM00097">
    <property type="entry name" value="WNT1"/>
    <property type="match status" value="1"/>
</dbReference>
<dbReference type="PROSITE" id="PS00246">
    <property type="entry name" value="WNT1"/>
    <property type="match status" value="1"/>
</dbReference>
<protein>
    <recommendedName>
        <fullName>Protein Wnt-2</fullName>
    </recommendedName>
</protein>
<gene>
    <name type="primary">WNT2</name>
</gene>
<keyword id="KW-0217">Developmental protein</keyword>
<keyword id="KW-1015">Disulfide bond</keyword>
<keyword id="KW-0272">Extracellular matrix</keyword>
<keyword id="KW-0325">Glycoprotein</keyword>
<keyword id="KW-0449">Lipoprotein</keyword>
<keyword id="KW-1185">Reference proteome</keyword>
<keyword id="KW-0964">Secreted</keyword>
<keyword id="KW-0732">Signal</keyword>
<keyword id="KW-0879">Wnt signaling pathway</keyword>
<comment type="function">
    <text evidence="1 2">Ligand for members of the frizzled family of seven transmembrane receptors. Functions in the canonical Wnt signaling pathway that results in activation of transcription factors of the TCF/LEF family (By similarity). Functions as a upstream regulator of FGF10 expression. Plays an important role in embryonic lung development. May contribute to embryonic brain development by regulating the proliferation of dopaminergic precursors and neurons (By similarity).</text>
</comment>
<comment type="subcellular location">
    <subcellularLocation>
        <location evidence="1">Secreted</location>
        <location evidence="1">Extracellular space</location>
        <location evidence="1">Extracellular matrix</location>
    </subcellularLocation>
    <subcellularLocation>
        <location evidence="1">Secreted</location>
    </subcellularLocation>
</comment>
<comment type="PTM">
    <text evidence="1">Palmitoleoylation is required for efficient binding to frizzled receptors. Depalmitoleoylation leads to Wnt signaling pathway inhibition.</text>
</comment>
<comment type="similarity">
    <text evidence="6">Belongs to the Wnt family.</text>
</comment>
<feature type="signal peptide" evidence="5">
    <location>
        <begin position="1"/>
        <end position="25"/>
    </location>
</feature>
<feature type="chain" id="PRO_0000279198" description="Protein Wnt-2">
    <location>
        <begin position="26"/>
        <end position="360"/>
    </location>
</feature>
<feature type="lipid moiety-binding region" description="O-palmitoleoyl serine; by PORCN" evidence="4">
    <location>
        <position position="212"/>
    </location>
</feature>
<feature type="glycosylation site" description="N-linked (GlcNAc...) asparagine" evidence="5">
    <location>
        <position position="295"/>
    </location>
</feature>
<feature type="disulfide bond" evidence="3">
    <location>
        <begin position="76"/>
        <end position="87"/>
    </location>
</feature>
<feature type="disulfide bond" evidence="3">
    <location>
        <begin position="127"/>
        <end position="135"/>
    </location>
</feature>
<feature type="disulfide bond" evidence="3">
    <location>
        <begin position="137"/>
        <end position="157"/>
    </location>
</feature>
<feature type="disulfide bond" evidence="3">
    <location>
        <begin position="206"/>
        <end position="220"/>
    </location>
</feature>
<feature type="disulfide bond" evidence="3">
    <location>
        <begin position="208"/>
        <end position="215"/>
    </location>
</feature>
<feature type="disulfide bond" evidence="3">
    <location>
        <begin position="278"/>
        <end position="309"/>
    </location>
</feature>
<feature type="disulfide bond" evidence="3">
    <location>
        <begin position="294"/>
        <end position="304"/>
    </location>
</feature>
<feature type="disulfide bond" evidence="3">
    <location>
        <begin position="308"/>
        <end position="348"/>
    </location>
</feature>
<feature type="disulfide bond" evidence="3">
    <location>
        <begin position="324"/>
        <end position="339"/>
    </location>
</feature>
<feature type="disulfide bond" evidence="3">
    <location>
        <begin position="326"/>
        <end position="336"/>
    </location>
</feature>
<feature type="disulfide bond" evidence="3">
    <location>
        <begin position="331"/>
        <end position="332"/>
    </location>
</feature>
<name>WNT2_FELCA</name>
<sequence length="360" mass="40435">MNAPLGGIWPWLPLLLTWLTPEVSSSWWYMRATGGSSRVMCDNVPGLVSRQRQLCHRHPDVMRAIGLGVAEWTAECQHQFRQHRWNCNTLDRDHSLFGRVLLRSSRESAFVYAVSSAGVVFAITRACSQGELKSCSCDPKKKGTAKDSKGNFDWGGCSDNIDYGIKFARAFVDAKERKGKDARALMNLHNNRAGRKAVKRFLKQECKCHGVSGSCTLRTCWLAMADFRKTGDYLWRKYNGAIQVVMNQDGTGFTVANKRFKKPTKNDLVYFENSPDYCIRDRDAGSLGTAGRVCNLTSRGMDSCEVMCCGRGYDTSHVTRMTKCECKFHWCCAVRCQDCLEALDVHTCKAPKSVDWAAPT</sequence>
<organism>
    <name type="scientific">Felis catus</name>
    <name type="common">Cat</name>
    <name type="synonym">Felis silvestris catus</name>
    <dbReference type="NCBI Taxonomy" id="9685"/>
    <lineage>
        <taxon>Eukaryota</taxon>
        <taxon>Metazoa</taxon>
        <taxon>Chordata</taxon>
        <taxon>Craniata</taxon>
        <taxon>Vertebrata</taxon>
        <taxon>Euteleostomi</taxon>
        <taxon>Mammalia</taxon>
        <taxon>Eutheria</taxon>
        <taxon>Laurasiatheria</taxon>
        <taxon>Carnivora</taxon>
        <taxon>Feliformia</taxon>
        <taxon>Felidae</taxon>
        <taxon>Felinae</taxon>
        <taxon>Felis</taxon>
    </lineage>
</organism>
<reference key="1">
    <citation type="journal article" date="2003" name="Nature">
        <title>Comparative analyses of multi-species sequences from targeted genomic regions.</title>
        <authorList>
            <person name="Thomas J.W."/>
            <person name="Touchman J.W."/>
            <person name="Blakesley R.W."/>
            <person name="Bouffard G.G."/>
            <person name="Beckstrom-Sternberg S.M."/>
            <person name="Margulies E.H."/>
            <person name="Blanchette M."/>
            <person name="Siepel A.C."/>
            <person name="Thomas P.J."/>
            <person name="McDowell J.C."/>
            <person name="Maskeri B."/>
            <person name="Hansen N.F."/>
            <person name="Schwartz M.S."/>
            <person name="Weber R.J."/>
            <person name="Kent W.J."/>
            <person name="Karolchik D."/>
            <person name="Bruen T.C."/>
            <person name="Bevan R."/>
            <person name="Cutler D.J."/>
            <person name="Schwartz S."/>
            <person name="Elnitski L."/>
            <person name="Idol J.R."/>
            <person name="Prasad A.B."/>
            <person name="Lee-Lin S.-Q."/>
            <person name="Maduro V.V.B."/>
            <person name="Summers T.J."/>
            <person name="Portnoy M.E."/>
            <person name="Dietrich N.L."/>
            <person name="Akhter N."/>
            <person name="Ayele K."/>
            <person name="Benjamin B."/>
            <person name="Cariaga K."/>
            <person name="Brinkley C.P."/>
            <person name="Brooks S.Y."/>
            <person name="Granite S."/>
            <person name="Guan X."/>
            <person name="Gupta J."/>
            <person name="Haghighi P."/>
            <person name="Ho S.-L."/>
            <person name="Huang M.C."/>
            <person name="Karlins E."/>
            <person name="Laric P.L."/>
            <person name="Legaspi R."/>
            <person name="Lim M.J."/>
            <person name="Maduro Q.L."/>
            <person name="Masiello C.A."/>
            <person name="Mastrian S.D."/>
            <person name="McCloskey J.C."/>
            <person name="Pearson R."/>
            <person name="Stantripop S."/>
            <person name="Tiongson E.E."/>
            <person name="Tran J.T."/>
            <person name="Tsurgeon C."/>
            <person name="Vogt J.L."/>
            <person name="Walker M.A."/>
            <person name="Wetherby K.D."/>
            <person name="Wiggins L.S."/>
            <person name="Young A.C."/>
            <person name="Zhang L.-H."/>
            <person name="Osoegawa K."/>
            <person name="Zhu B."/>
            <person name="Zhao B."/>
            <person name="Shu C.L."/>
            <person name="De Jong P.J."/>
            <person name="Lawrence C.E."/>
            <person name="Smit A.F."/>
            <person name="Chakravarti A."/>
            <person name="Haussler D."/>
            <person name="Green P."/>
            <person name="Miller W."/>
            <person name="Green E.D."/>
        </authorList>
    </citation>
    <scope>NUCLEOTIDE SEQUENCE [LARGE SCALE GENOMIC DNA]</scope>
</reference>
<evidence type="ECO:0000250" key="1">
    <source>
        <dbReference type="UniProtKB" id="P09544"/>
    </source>
</evidence>
<evidence type="ECO:0000250" key="2">
    <source>
        <dbReference type="UniProtKB" id="P21552"/>
    </source>
</evidence>
<evidence type="ECO:0000250" key="3">
    <source>
        <dbReference type="UniProtKB" id="P28026"/>
    </source>
</evidence>
<evidence type="ECO:0000250" key="4">
    <source>
        <dbReference type="UniProtKB" id="P56704"/>
    </source>
</evidence>
<evidence type="ECO:0000255" key="5"/>
<evidence type="ECO:0000305" key="6"/>